<dbReference type="EC" id="2.7.1.39" evidence="1"/>
<dbReference type="EMBL" id="AM260525">
    <property type="protein sequence ID" value="CAK01090.1"/>
    <property type="molecule type" value="Genomic_DNA"/>
</dbReference>
<dbReference type="RefSeq" id="WP_012231195.1">
    <property type="nucleotide sequence ID" value="NC_010161.1"/>
</dbReference>
<dbReference type="SMR" id="A9IQR2"/>
<dbReference type="KEGG" id="btr:BT_0656"/>
<dbReference type="eggNOG" id="COG2334">
    <property type="taxonomic scope" value="Bacteria"/>
</dbReference>
<dbReference type="HOGENOM" id="CLU_053300_1_0_5"/>
<dbReference type="UniPathway" id="UPA00050">
    <property type="reaction ID" value="UER00064"/>
</dbReference>
<dbReference type="Proteomes" id="UP000001592">
    <property type="component" value="Chromosome"/>
</dbReference>
<dbReference type="GO" id="GO:0005524">
    <property type="term" value="F:ATP binding"/>
    <property type="evidence" value="ECO:0007669"/>
    <property type="project" value="UniProtKB-KW"/>
</dbReference>
<dbReference type="GO" id="GO:0004413">
    <property type="term" value="F:homoserine kinase activity"/>
    <property type="evidence" value="ECO:0007669"/>
    <property type="project" value="UniProtKB-UniRule"/>
</dbReference>
<dbReference type="GO" id="GO:0009088">
    <property type="term" value="P:threonine biosynthetic process"/>
    <property type="evidence" value="ECO:0007669"/>
    <property type="project" value="UniProtKB-UniRule"/>
</dbReference>
<dbReference type="CDD" id="cd05153">
    <property type="entry name" value="HomoserineK_II"/>
    <property type="match status" value="1"/>
</dbReference>
<dbReference type="Gene3D" id="3.90.1200.10">
    <property type="match status" value="1"/>
</dbReference>
<dbReference type="Gene3D" id="3.30.200.20">
    <property type="entry name" value="Phosphorylase Kinase, domain 1"/>
    <property type="match status" value="1"/>
</dbReference>
<dbReference type="HAMAP" id="MF_00301">
    <property type="entry name" value="Homoser_kinase_2"/>
    <property type="match status" value="1"/>
</dbReference>
<dbReference type="InterPro" id="IPR002575">
    <property type="entry name" value="Aminoglycoside_PTrfase"/>
</dbReference>
<dbReference type="InterPro" id="IPR005280">
    <property type="entry name" value="Homoserine_kinase_II"/>
</dbReference>
<dbReference type="InterPro" id="IPR011009">
    <property type="entry name" value="Kinase-like_dom_sf"/>
</dbReference>
<dbReference type="InterPro" id="IPR050249">
    <property type="entry name" value="Pseudomonas-type_ThrB"/>
</dbReference>
<dbReference type="NCBIfam" id="NF003558">
    <property type="entry name" value="PRK05231.1"/>
    <property type="match status" value="1"/>
</dbReference>
<dbReference type="NCBIfam" id="TIGR00938">
    <property type="entry name" value="thrB_alt"/>
    <property type="match status" value="1"/>
</dbReference>
<dbReference type="PANTHER" id="PTHR21064:SF6">
    <property type="entry name" value="AMINOGLYCOSIDE PHOSPHOTRANSFERASE DOMAIN-CONTAINING PROTEIN"/>
    <property type="match status" value="1"/>
</dbReference>
<dbReference type="PANTHER" id="PTHR21064">
    <property type="entry name" value="AMINOGLYCOSIDE PHOSPHOTRANSFERASE DOMAIN-CONTAINING PROTEIN-RELATED"/>
    <property type="match status" value="1"/>
</dbReference>
<dbReference type="Pfam" id="PF01636">
    <property type="entry name" value="APH"/>
    <property type="match status" value="1"/>
</dbReference>
<dbReference type="SUPFAM" id="SSF56112">
    <property type="entry name" value="Protein kinase-like (PK-like)"/>
    <property type="match status" value="1"/>
</dbReference>
<sequence>MAVYTDIHPNDLKVFLTRYAIGSLLSYQGIEEGIENSNFMLETTQGRFILTLYEKRISKDDLPFFCRLMQHLGQRGIPCPQPIIQNDGVMIGELAGRPAAIITFLEGEWIRQPDIDHCGEVGTGLAQLHLAGQDFTLSRKNTLSIMDWQVLWQRCQITEDALLKEFGQKIESELAFLQENWPFNLPTGIIHADLFNDNVFFVNHCLSGMIDFYFACNDFFSYDLAICLNAWCFEPDYSYNLIKARKLLENYQKIRPLIPLELDKIVLLARGASLRFLLTRLYDWFNTPPDSFVIKKNPWEYWHKLCFFSNVNSLSELGF</sequence>
<name>KHSE_BART1</name>
<reference key="1">
    <citation type="journal article" date="2007" name="Nat. Genet.">
        <title>Genomic analysis of Bartonella identifies type IV secretion systems as host adaptability factors.</title>
        <authorList>
            <person name="Saenz H.L."/>
            <person name="Engel P."/>
            <person name="Stoeckli M.C."/>
            <person name="Lanz C."/>
            <person name="Raddatz G."/>
            <person name="Vayssier-Taussat M."/>
            <person name="Birtles R."/>
            <person name="Schuster S.C."/>
            <person name="Dehio C."/>
        </authorList>
    </citation>
    <scope>NUCLEOTIDE SEQUENCE [LARGE SCALE GENOMIC DNA]</scope>
    <source>
        <strain>CIP 105476 / IBS 506</strain>
    </source>
</reference>
<feature type="chain" id="PRO_1000079015" description="Homoserine kinase">
    <location>
        <begin position="1"/>
        <end position="319"/>
    </location>
</feature>
<accession>A9IQR2</accession>
<keyword id="KW-0028">Amino-acid biosynthesis</keyword>
<keyword id="KW-0067">ATP-binding</keyword>
<keyword id="KW-0418">Kinase</keyword>
<keyword id="KW-0547">Nucleotide-binding</keyword>
<keyword id="KW-0791">Threonine biosynthesis</keyword>
<keyword id="KW-0808">Transferase</keyword>
<evidence type="ECO:0000255" key="1">
    <source>
        <dbReference type="HAMAP-Rule" id="MF_00301"/>
    </source>
</evidence>
<comment type="catalytic activity">
    <reaction evidence="1">
        <text>L-homoserine + ATP = O-phospho-L-homoserine + ADP + H(+)</text>
        <dbReference type="Rhea" id="RHEA:13985"/>
        <dbReference type="ChEBI" id="CHEBI:15378"/>
        <dbReference type="ChEBI" id="CHEBI:30616"/>
        <dbReference type="ChEBI" id="CHEBI:57476"/>
        <dbReference type="ChEBI" id="CHEBI:57590"/>
        <dbReference type="ChEBI" id="CHEBI:456216"/>
        <dbReference type="EC" id="2.7.1.39"/>
    </reaction>
</comment>
<comment type="pathway">
    <text evidence="1">Amino-acid biosynthesis; L-threonine biosynthesis; L-threonine from L-aspartate: step 4/5.</text>
</comment>
<comment type="similarity">
    <text evidence="1">Belongs to the pseudomonas-type ThrB family.</text>
</comment>
<protein>
    <recommendedName>
        <fullName evidence="1">Homoserine kinase</fullName>
        <shortName evidence="1">HK</shortName>
        <shortName evidence="1">HSK</shortName>
        <ecNumber evidence="1">2.7.1.39</ecNumber>
    </recommendedName>
</protein>
<organism>
    <name type="scientific">Bartonella tribocorum (strain CIP 105476 / IBS 506)</name>
    <dbReference type="NCBI Taxonomy" id="382640"/>
    <lineage>
        <taxon>Bacteria</taxon>
        <taxon>Pseudomonadati</taxon>
        <taxon>Pseudomonadota</taxon>
        <taxon>Alphaproteobacteria</taxon>
        <taxon>Hyphomicrobiales</taxon>
        <taxon>Bartonellaceae</taxon>
        <taxon>Bartonella</taxon>
    </lineage>
</organism>
<proteinExistence type="inferred from homology"/>
<gene>
    <name evidence="1" type="primary">thrB</name>
    <name type="ordered locus">BT_0656</name>
</gene>